<feature type="chain" id="PRO_0000317201" description="Transmembrane protein 202">
    <location>
        <begin position="1"/>
        <end position="273"/>
    </location>
</feature>
<feature type="transmembrane region" description="Helical" evidence="1">
    <location>
        <begin position="53"/>
        <end position="75"/>
    </location>
</feature>
<feature type="transmembrane region" description="Helical" evidence="1">
    <location>
        <begin position="121"/>
        <end position="141"/>
    </location>
</feature>
<feature type="transmembrane region" description="Helical" evidence="1">
    <location>
        <begin position="155"/>
        <end position="175"/>
    </location>
</feature>
<feature type="transmembrane region" description="Helical" evidence="1">
    <location>
        <begin position="189"/>
        <end position="209"/>
    </location>
</feature>
<feature type="region of interest" description="Disordered" evidence="2">
    <location>
        <begin position="242"/>
        <end position="273"/>
    </location>
</feature>
<feature type="compositionally biased region" description="Basic and acidic residues" evidence="2">
    <location>
        <begin position="247"/>
        <end position="266"/>
    </location>
</feature>
<feature type="sequence variant" id="VAR_051434" description="In dbSNP:rs16956904.">
    <original>M</original>
    <variation>L</variation>
    <location>
        <position position="204"/>
    </location>
</feature>
<name>TM202_HUMAN</name>
<evidence type="ECO:0000255" key="1"/>
<evidence type="ECO:0000256" key="2">
    <source>
        <dbReference type="SAM" id="MobiDB-lite"/>
    </source>
</evidence>
<evidence type="ECO:0000305" key="3"/>
<sequence>MERREHLTLTFHSPEVPKIKGNRKYQRPTVPAKKHPSASMSCQRQQQLMDQAHIYIRTLCGSLCSFSLLMLIAMSPLNWVQFLVIKNGLELYAGLWTLCNHELCWSHTPKPPYYLQYSRAFFLISVFTILTGLGWLFSSWILNRGSMTTNLDLKVSMLSFISATCLLLCLNLFVAQVHWHTRDAMESDLLWTYYLNWCSDIFYMFAGIISLLNYLTSRSPACDENVTVIPTERSRLGVGPVTTVSPAKDEGPRSEMESLSVREKNLPKSGLWW</sequence>
<comment type="subcellular location">
    <subcellularLocation>
        <location evidence="3">Membrane</location>
        <topology evidence="3">Multi-pass membrane protein</topology>
    </subcellularLocation>
</comment>
<reference key="1">
    <citation type="journal article" date="2006" name="Nature">
        <title>Analysis of the DNA sequence and duplication history of human chromosome 15.</title>
        <authorList>
            <person name="Zody M.C."/>
            <person name="Garber M."/>
            <person name="Sharpe T."/>
            <person name="Young S.K."/>
            <person name="Rowen L."/>
            <person name="O'Neill K."/>
            <person name="Whittaker C.A."/>
            <person name="Kamal M."/>
            <person name="Chang J.L."/>
            <person name="Cuomo C.A."/>
            <person name="Dewar K."/>
            <person name="FitzGerald M.G."/>
            <person name="Kodira C.D."/>
            <person name="Madan A."/>
            <person name="Qin S."/>
            <person name="Yang X."/>
            <person name="Abbasi N."/>
            <person name="Abouelleil A."/>
            <person name="Arachchi H.M."/>
            <person name="Baradarani L."/>
            <person name="Birditt B."/>
            <person name="Bloom S."/>
            <person name="Bloom T."/>
            <person name="Borowsky M.L."/>
            <person name="Burke J."/>
            <person name="Butler J."/>
            <person name="Cook A."/>
            <person name="DeArellano K."/>
            <person name="DeCaprio D."/>
            <person name="Dorris L. III"/>
            <person name="Dors M."/>
            <person name="Eichler E.E."/>
            <person name="Engels R."/>
            <person name="Fahey J."/>
            <person name="Fleetwood P."/>
            <person name="Friedman C."/>
            <person name="Gearin G."/>
            <person name="Hall J.L."/>
            <person name="Hensley G."/>
            <person name="Johnson E."/>
            <person name="Jones C."/>
            <person name="Kamat A."/>
            <person name="Kaur A."/>
            <person name="Locke D.P."/>
            <person name="Madan A."/>
            <person name="Munson G."/>
            <person name="Jaffe D.B."/>
            <person name="Lui A."/>
            <person name="Macdonald P."/>
            <person name="Mauceli E."/>
            <person name="Naylor J.W."/>
            <person name="Nesbitt R."/>
            <person name="Nicol R."/>
            <person name="O'Leary S.B."/>
            <person name="Ratcliffe A."/>
            <person name="Rounsley S."/>
            <person name="She X."/>
            <person name="Sneddon K.M.B."/>
            <person name="Stewart S."/>
            <person name="Sougnez C."/>
            <person name="Stone S.M."/>
            <person name="Topham K."/>
            <person name="Vincent D."/>
            <person name="Wang S."/>
            <person name="Zimmer A.R."/>
            <person name="Birren B.W."/>
            <person name="Hood L."/>
            <person name="Lander E.S."/>
            <person name="Nusbaum C."/>
        </authorList>
    </citation>
    <scope>NUCLEOTIDE SEQUENCE [LARGE SCALE GENOMIC DNA]</scope>
</reference>
<organism>
    <name type="scientific">Homo sapiens</name>
    <name type="common">Human</name>
    <dbReference type="NCBI Taxonomy" id="9606"/>
    <lineage>
        <taxon>Eukaryota</taxon>
        <taxon>Metazoa</taxon>
        <taxon>Chordata</taxon>
        <taxon>Craniata</taxon>
        <taxon>Vertebrata</taxon>
        <taxon>Euteleostomi</taxon>
        <taxon>Mammalia</taxon>
        <taxon>Eutheria</taxon>
        <taxon>Euarchontoglires</taxon>
        <taxon>Primates</taxon>
        <taxon>Haplorrhini</taxon>
        <taxon>Catarrhini</taxon>
        <taxon>Hominidae</taxon>
        <taxon>Homo</taxon>
    </lineage>
</organism>
<proteinExistence type="predicted"/>
<protein>
    <recommendedName>
        <fullName>Transmembrane protein 202</fullName>
    </recommendedName>
</protein>
<gene>
    <name type="primary">TMEM202</name>
</gene>
<accession>A6NGA9</accession>
<dbReference type="EMBL" id="AC079322">
    <property type="status" value="NOT_ANNOTATED_CDS"/>
    <property type="molecule type" value="Genomic_DNA"/>
</dbReference>
<dbReference type="CCDS" id="CCDS32287.1"/>
<dbReference type="RefSeq" id="NP_001073931.1">
    <property type="nucleotide sequence ID" value="NM_001080462.3"/>
</dbReference>
<dbReference type="BioGRID" id="130815">
    <property type="interactions" value="1"/>
</dbReference>
<dbReference type="FunCoup" id="A6NGA9">
    <property type="interactions" value="83"/>
</dbReference>
<dbReference type="STRING" id="9606.ENSP00000340212"/>
<dbReference type="TCDB" id="8.A.16.3.2">
    <property type="family name" value="the ca(+) channel auxiliary subunit Gama1-Gama8 (ccaGama) family"/>
</dbReference>
<dbReference type="iPTMnet" id="A6NGA9"/>
<dbReference type="PhosphoSitePlus" id="A6NGA9"/>
<dbReference type="BioMuta" id="TMEM202"/>
<dbReference type="PaxDb" id="9606-ENSP00000340212"/>
<dbReference type="PeptideAtlas" id="A6NGA9"/>
<dbReference type="Antibodypedia" id="66347">
    <property type="antibodies" value="11 antibodies from 6 providers"/>
</dbReference>
<dbReference type="DNASU" id="338949"/>
<dbReference type="Ensembl" id="ENST00000341689.4">
    <property type="protein sequence ID" value="ENSP00000340212.3"/>
    <property type="gene ID" value="ENSG00000187806.9"/>
</dbReference>
<dbReference type="GeneID" id="338949"/>
<dbReference type="KEGG" id="hsa:338949"/>
<dbReference type="MANE-Select" id="ENST00000341689.4">
    <property type="protein sequence ID" value="ENSP00000340212.3"/>
    <property type="RefSeq nucleotide sequence ID" value="NM_001080462.3"/>
    <property type="RefSeq protein sequence ID" value="NP_001073931.1"/>
</dbReference>
<dbReference type="UCSC" id="uc002auq.4">
    <property type="organism name" value="human"/>
</dbReference>
<dbReference type="AGR" id="HGNC:33733"/>
<dbReference type="CTD" id="338949"/>
<dbReference type="GeneCards" id="TMEM202"/>
<dbReference type="HGNC" id="HGNC:33733">
    <property type="gene designation" value="TMEM202"/>
</dbReference>
<dbReference type="HPA" id="ENSG00000187806">
    <property type="expression patterns" value="Tissue enriched (testis)"/>
</dbReference>
<dbReference type="neXtProt" id="NX_A6NGA9"/>
<dbReference type="PharmGKB" id="PA162406376"/>
<dbReference type="VEuPathDB" id="HostDB:ENSG00000187806"/>
<dbReference type="eggNOG" id="ENOG502R1C0">
    <property type="taxonomic scope" value="Eukaryota"/>
</dbReference>
<dbReference type="GeneTree" id="ENSGT01050000244814"/>
<dbReference type="HOGENOM" id="CLU_093889_0_0_1"/>
<dbReference type="InParanoid" id="A6NGA9"/>
<dbReference type="OMA" id="CMSPLNW"/>
<dbReference type="OrthoDB" id="9446743at2759"/>
<dbReference type="PAN-GO" id="A6NGA9">
    <property type="GO annotations" value="1 GO annotation based on evolutionary models"/>
</dbReference>
<dbReference type="PhylomeDB" id="A6NGA9"/>
<dbReference type="TreeFam" id="TF337324"/>
<dbReference type="PathwayCommons" id="A6NGA9"/>
<dbReference type="SignaLink" id="A6NGA9"/>
<dbReference type="BioGRID-ORCS" id="338949">
    <property type="hits" value="20 hits in 1143 CRISPR screens"/>
</dbReference>
<dbReference type="GenomeRNAi" id="338949"/>
<dbReference type="Pharos" id="A6NGA9">
    <property type="development level" value="Tdark"/>
</dbReference>
<dbReference type="PRO" id="PR:A6NGA9"/>
<dbReference type="Proteomes" id="UP000005640">
    <property type="component" value="Chromosome 15"/>
</dbReference>
<dbReference type="RNAct" id="A6NGA9">
    <property type="molecule type" value="protein"/>
</dbReference>
<dbReference type="Bgee" id="ENSG00000187806">
    <property type="expression patterns" value="Expressed in male germ line stem cell (sensu Vertebrata) in testis and 19 other cell types or tissues"/>
</dbReference>
<dbReference type="ExpressionAtlas" id="A6NGA9">
    <property type="expression patterns" value="baseline and differential"/>
</dbReference>
<dbReference type="GO" id="GO:0005886">
    <property type="term" value="C:plasma membrane"/>
    <property type="evidence" value="ECO:0000318"/>
    <property type="project" value="GO_Central"/>
</dbReference>
<dbReference type="FunFam" id="1.20.140.150:FF:000041">
    <property type="entry name" value="Transmembrane protein 202"/>
    <property type="match status" value="1"/>
</dbReference>
<dbReference type="InterPro" id="IPR050579">
    <property type="entry name" value="PMP-22/EMP/MP20-like"/>
</dbReference>
<dbReference type="PANTHER" id="PTHR10671">
    <property type="entry name" value="EPITHELIAL MEMBRANE PROTEIN-RELATED"/>
    <property type="match status" value="1"/>
</dbReference>
<dbReference type="PANTHER" id="PTHR10671:SF42">
    <property type="entry name" value="TRANSMEMBRANE PROTEIN 202"/>
    <property type="match status" value="1"/>
</dbReference>
<keyword id="KW-0472">Membrane</keyword>
<keyword id="KW-1185">Reference proteome</keyword>
<keyword id="KW-0812">Transmembrane</keyword>
<keyword id="KW-1133">Transmembrane helix</keyword>